<protein>
    <recommendedName>
        <fullName evidence="1">Ribosome maturation factor RimM</fullName>
    </recommendedName>
</protein>
<feature type="chain" id="PRO_1000001199" description="Ribosome maturation factor RimM">
    <location>
        <begin position="1"/>
        <end position="173"/>
    </location>
</feature>
<feature type="domain" description="PRC barrel" evidence="1">
    <location>
        <begin position="96"/>
        <end position="169"/>
    </location>
</feature>
<evidence type="ECO:0000255" key="1">
    <source>
        <dbReference type="HAMAP-Rule" id="MF_00014"/>
    </source>
</evidence>
<name>RIMM_MYCSK</name>
<keyword id="KW-0143">Chaperone</keyword>
<keyword id="KW-0963">Cytoplasm</keyword>
<keyword id="KW-0690">Ribosome biogenesis</keyword>
<keyword id="KW-0698">rRNA processing</keyword>
<accession>A1UEF4</accession>
<proteinExistence type="inferred from homology"/>
<comment type="function">
    <text evidence="1">An accessory protein needed during the final step in the assembly of 30S ribosomal subunit, possibly for assembly of the head region. Essential for efficient processing of 16S rRNA. May be needed both before and after RbfA during the maturation of 16S rRNA. It has affinity for free ribosomal 30S subunits but not for 70S ribosomes.</text>
</comment>
<comment type="subunit">
    <text evidence="1">Binds ribosomal protein uS19.</text>
</comment>
<comment type="subcellular location">
    <subcellularLocation>
        <location evidence="1">Cytoplasm</location>
    </subcellularLocation>
</comment>
<comment type="domain">
    <text evidence="1">The PRC barrel domain binds ribosomal protein uS19.</text>
</comment>
<comment type="similarity">
    <text evidence="1">Belongs to the RimM family.</text>
</comment>
<sequence length="173" mass="18382">MDLVIGRVAKAHGVTGELVVEVRTDDPDARFVPGARLRGRAPRGGAERAFVVESVRPHGGRLLLRLDGVADRTAADALRGTVFLVDSADLPPIEEPDEYYDHQLEGLLVRTVDGVDVGTVAEVLHTAAGELLSVKTPEGAEILVPFVTAIVPRVSLADGLVEIDPPEGLLDLE</sequence>
<dbReference type="EMBL" id="CP000518">
    <property type="protein sequence ID" value="ABL91212.1"/>
    <property type="molecule type" value="Genomic_DNA"/>
</dbReference>
<dbReference type="SMR" id="A1UEF4"/>
<dbReference type="STRING" id="189918.Mkms_2013"/>
<dbReference type="KEGG" id="mkm:Mkms_2013"/>
<dbReference type="HOGENOM" id="CLU_077636_0_0_11"/>
<dbReference type="OrthoDB" id="5381335at2"/>
<dbReference type="GO" id="GO:0005737">
    <property type="term" value="C:cytoplasm"/>
    <property type="evidence" value="ECO:0007669"/>
    <property type="project" value="UniProtKB-SubCell"/>
</dbReference>
<dbReference type="GO" id="GO:0005840">
    <property type="term" value="C:ribosome"/>
    <property type="evidence" value="ECO:0007669"/>
    <property type="project" value="InterPro"/>
</dbReference>
<dbReference type="GO" id="GO:0043022">
    <property type="term" value="F:ribosome binding"/>
    <property type="evidence" value="ECO:0007669"/>
    <property type="project" value="InterPro"/>
</dbReference>
<dbReference type="GO" id="GO:0042274">
    <property type="term" value="P:ribosomal small subunit biogenesis"/>
    <property type="evidence" value="ECO:0007669"/>
    <property type="project" value="UniProtKB-UniRule"/>
</dbReference>
<dbReference type="GO" id="GO:0006364">
    <property type="term" value="P:rRNA processing"/>
    <property type="evidence" value="ECO:0007669"/>
    <property type="project" value="UniProtKB-UniRule"/>
</dbReference>
<dbReference type="Gene3D" id="2.30.30.240">
    <property type="entry name" value="PRC-barrel domain"/>
    <property type="match status" value="1"/>
</dbReference>
<dbReference type="Gene3D" id="2.40.30.60">
    <property type="entry name" value="RimM"/>
    <property type="match status" value="1"/>
</dbReference>
<dbReference type="HAMAP" id="MF_00014">
    <property type="entry name" value="Ribosome_mat_RimM"/>
    <property type="match status" value="1"/>
</dbReference>
<dbReference type="InterPro" id="IPR011033">
    <property type="entry name" value="PRC_barrel-like_sf"/>
</dbReference>
<dbReference type="InterPro" id="IPR056792">
    <property type="entry name" value="PRC_RimM"/>
</dbReference>
<dbReference type="InterPro" id="IPR011961">
    <property type="entry name" value="RimM"/>
</dbReference>
<dbReference type="InterPro" id="IPR002676">
    <property type="entry name" value="RimM_N"/>
</dbReference>
<dbReference type="InterPro" id="IPR036976">
    <property type="entry name" value="RimM_N_sf"/>
</dbReference>
<dbReference type="InterPro" id="IPR009000">
    <property type="entry name" value="Transl_B-barrel_sf"/>
</dbReference>
<dbReference type="NCBIfam" id="TIGR02273">
    <property type="entry name" value="16S_RimM"/>
    <property type="match status" value="1"/>
</dbReference>
<dbReference type="PANTHER" id="PTHR33692">
    <property type="entry name" value="RIBOSOME MATURATION FACTOR RIMM"/>
    <property type="match status" value="1"/>
</dbReference>
<dbReference type="PANTHER" id="PTHR33692:SF1">
    <property type="entry name" value="RIBOSOME MATURATION FACTOR RIMM"/>
    <property type="match status" value="1"/>
</dbReference>
<dbReference type="Pfam" id="PF24986">
    <property type="entry name" value="PRC_RimM"/>
    <property type="match status" value="1"/>
</dbReference>
<dbReference type="Pfam" id="PF01782">
    <property type="entry name" value="RimM"/>
    <property type="match status" value="1"/>
</dbReference>
<dbReference type="SUPFAM" id="SSF50346">
    <property type="entry name" value="PRC-barrel domain"/>
    <property type="match status" value="1"/>
</dbReference>
<dbReference type="SUPFAM" id="SSF50447">
    <property type="entry name" value="Translation proteins"/>
    <property type="match status" value="1"/>
</dbReference>
<gene>
    <name evidence="1" type="primary">rimM</name>
    <name type="ordered locus">Mkms_2013</name>
</gene>
<organism>
    <name type="scientific">Mycobacterium sp. (strain KMS)</name>
    <dbReference type="NCBI Taxonomy" id="189918"/>
    <lineage>
        <taxon>Bacteria</taxon>
        <taxon>Bacillati</taxon>
        <taxon>Actinomycetota</taxon>
        <taxon>Actinomycetes</taxon>
        <taxon>Mycobacteriales</taxon>
        <taxon>Mycobacteriaceae</taxon>
        <taxon>Mycobacterium</taxon>
    </lineage>
</organism>
<reference key="1">
    <citation type="submission" date="2006-12" db="EMBL/GenBank/DDBJ databases">
        <title>Complete sequence of chromosome of Mycobacterium sp. KMS.</title>
        <authorList>
            <consortium name="US DOE Joint Genome Institute"/>
            <person name="Copeland A."/>
            <person name="Lucas S."/>
            <person name="Lapidus A."/>
            <person name="Barry K."/>
            <person name="Detter J.C."/>
            <person name="Glavina del Rio T."/>
            <person name="Hammon N."/>
            <person name="Israni S."/>
            <person name="Dalin E."/>
            <person name="Tice H."/>
            <person name="Pitluck S."/>
            <person name="Kiss H."/>
            <person name="Brettin T."/>
            <person name="Bruce D."/>
            <person name="Han C."/>
            <person name="Tapia R."/>
            <person name="Gilna P."/>
            <person name="Schmutz J."/>
            <person name="Larimer F."/>
            <person name="Land M."/>
            <person name="Hauser L."/>
            <person name="Kyrpides N."/>
            <person name="Mikhailova N."/>
            <person name="Miller C.D."/>
            <person name="Richardson P."/>
        </authorList>
    </citation>
    <scope>NUCLEOTIDE SEQUENCE [LARGE SCALE GENOMIC DNA]</scope>
    <source>
        <strain>KMS</strain>
    </source>
</reference>